<keyword id="KW-0507">mRNA processing</keyword>
<keyword id="KW-0508">mRNA splicing</keyword>
<keyword id="KW-0539">Nucleus</keyword>
<keyword id="KW-1185">Reference proteome</keyword>
<keyword id="KW-0677">Repeat</keyword>
<keyword id="KW-0694">RNA-binding</keyword>
<comment type="function">
    <text evidence="1">Necessary for the splicing of pre-mRNA. Binds to the polypyrimidine tract of introns early during spliceosome assembly (By similarity).</text>
</comment>
<comment type="subunit">
    <text>Forms a heterodimer with the U2AF small subunit.</text>
</comment>
<comment type="interaction">
    <interactant intactId="EBI-165226">
        <id>Q24562</id>
    </interactant>
    <interactant intactId="EBI-121011">
        <id>Q94535</id>
        <label>U2af38</label>
    </interactant>
    <organismsDiffer>false</organismsDiffer>
    <experiments>4</experiments>
</comment>
<comment type="subcellular location">
    <subcellularLocation>
        <location>Nucleus</location>
    </subcellularLocation>
</comment>
<comment type="developmental stage">
    <text>Present throughout development.</text>
</comment>
<comment type="similarity">
    <text evidence="4">Belongs to the splicing factor SR family.</text>
</comment>
<reference key="1">
    <citation type="journal article" date="1993" name="Science">
        <title>The conserved pre-mRNA splicing factor U2AF from Drosophila: requirement for viability.</title>
        <authorList>
            <person name="Kanaar R."/>
            <person name="Roche S.E."/>
            <person name="Beall E.L."/>
            <person name="Green M.R."/>
            <person name="Rio D.C."/>
        </authorList>
    </citation>
    <scope>NUCLEOTIDE SEQUENCE [MRNA]</scope>
    <source>
        <strain>SB2040</strain>
        <tissue>Embryo</tissue>
    </source>
</reference>
<reference key="2">
    <citation type="journal article" date="2000" name="Science">
        <title>The genome sequence of Drosophila melanogaster.</title>
        <authorList>
            <person name="Adams M.D."/>
            <person name="Celniker S.E."/>
            <person name="Holt R.A."/>
            <person name="Evans C.A."/>
            <person name="Gocayne J.D."/>
            <person name="Amanatides P.G."/>
            <person name="Scherer S.E."/>
            <person name="Li P.W."/>
            <person name="Hoskins R.A."/>
            <person name="Galle R.F."/>
            <person name="George R.A."/>
            <person name="Lewis S.E."/>
            <person name="Richards S."/>
            <person name="Ashburner M."/>
            <person name="Henderson S.N."/>
            <person name="Sutton G.G."/>
            <person name="Wortman J.R."/>
            <person name="Yandell M.D."/>
            <person name="Zhang Q."/>
            <person name="Chen L.X."/>
            <person name="Brandon R.C."/>
            <person name="Rogers Y.-H.C."/>
            <person name="Blazej R.G."/>
            <person name="Champe M."/>
            <person name="Pfeiffer B.D."/>
            <person name="Wan K.H."/>
            <person name="Doyle C."/>
            <person name="Baxter E.G."/>
            <person name="Helt G."/>
            <person name="Nelson C.R."/>
            <person name="Miklos G.L.G."/>
            <person name="Abril J.F."/>
            <person name="Agbayani A."/>
            <person name="An H.-J."/>
            <person name="Andrews-Pfannkoch C."/>
            <person name="Baldwin D."/>
            <person name="Ballew R.M."/>
            <person name="Basu A."/>
            <person name="Baxendale J."/>
            <person name="Bayraktaroglu L."/>
            <person name="Beasley E.M."/>
            <person name="Beeson K.Y."/>
            <person name="Benos P.V."/>
            <person name="Berman B.P."/>
            <person name="Bhandari D."/>
            <person name="Bolshakov S."/>
            <person name="Borkova D."/>
            <person name="Botchan M.R."/>
            <person name="Bouck J."/>
            <person name="Brokstein P."/>
            <person name="Brottier P."/>
            <person name="Burtis K.C."/>
            <person name="Busam D.A."/>
            <person name="Butler H."/>
            <person name="Cadieu E."/>
            <person name="Center A."/>
            <person name="Chandra I."/>
            <person name="Cherry J.M."/>
            <person name="Cawley S."/>
            <person name="Dahlke C."/>
            <person name="Davenport L.B."/>
            <person name="Davies P."/>
            <person name="de Pablos B."/>
            <person name="Delcher A."/>
            <person name="Deng Z."/>
            <person name="Mays A.D."/>
            <person name="Dew I."/>
            <person name="Dietz S.M."/>
            <person name="Dodson K."/>
            <person name="Doup L.E."/>
            <person name="Downes M."/>
            <person name="Dugan-Rocha S."/>
            <person name="Dunkov B.C."/>
            <person name="Dunn P."/>
            <person name="Durbin K.J."/>
            <person name="Evangelista C.C."/>
            <person name="Ferraz C."/>
            <person name="Ferriera S."/>
            <person name="Fleischmann W."/>
            <person name="Fosler C."/>
            <person name="Gabrielian A.E."/>
            <person name="Garg N.S."/>
            <person name="Gelbart W.M."/>
            <person name="Glasser K."/>
            <person name="Glodek A."/>
            <person name="Gong F."/>
            <person name="Gorrell J.H."/>
            <person name="Gu Z."/>
            <person name="Guan P."/>
            <person name="Harris M."/>
            <person name="Harris N.L."/>
            <person name="Harvey D.A."/>
            <person name="Heiman T.J."/>
            <person name="Hernandez J.R."/>
            <person name="Houck J."/>
            <person name="Hostin D."/>
            <person name="Houston K.A."/>
            <person name="Howland T.J."/>
            <person name="Wei M.-H."/>
            <person name="Ibegwam C."/>
            <person name="Jalali M."/>
            <person name="Kalush F."/>
            <person name="Karpen G.H."/>
            <person name="Ke Z."/>
            <person name="Kennison J.A."/>
            <person name="Ketchum K.A."/>
            <person name="Kimmel B.E."/>
            <person name="Kodira C.D."/>
            <person name="Kraft C.L."/>
            <person name="Kravitz S."/>
            <person name="Kulp D."/>
            <person name="Lai Z."/>
            <person name="Lasko P."/>
            <person name="Lei Y."/>
            <person name="Levitsky A.A."/>
            <person name="Li J.H."/>
            <person name="Li Z."/>
            <person name="Liang Y."/>
            <person name="Lin X."/>
            <person name="Liu X."/>
            <person name="Mattei B."/>
            <person name="McIntosh T.C."/>
            <person name="McLeod M.P."/>
            <person name="McPherson D."/>
            <person name="Merkulov G."/>
            <person name="Milshina N.V."/>
            <person name="Mobarry C."/>
            <person name="Morris J."/>
            <person name="Moshrefi A."/>
            <person name="Mount S.M."/>
            <person name="Moy M."/>
            <person name="Murphy B."/>
            <person name="Murphy L."/>
            <person name="Muzny D.M."/>
            <person name="Nelson D.L."/>
            <person name="Nelson D.R."/>
            <person name="Nelson K.A."/>
            <person name="Nixon K."/>
            <person name="Nusskern D.R."/>
            <person name="Pacleb J.M."/>
            <person name="Palazzolo M."/>
            <person name="Pittman G.S."/>
            <person name="Pan S."/>
            <person name="Pollard J."/>
            <person name="Puri V."/>
            <person name="Reese M.G."/>
            <person name="Reinert K."/>
            <person name="Remington K."/>
            <person name="Saunders R.D.C."/>
            <person name="Scheeler F."/>
            <person name="Shen H."/>
            <person name="Shue B.C."/>
            <person name="Siden-Kiamos I."/>
            <person name="Simpson M."/>
            <person name="Skupski M.P."/>
            <person name="Smith T.J."/>
            <person name="Spier E."/>
            <person name="Spradling A.C."/>
            <person name="Stapleton M."/>
            <person name="Strong R."/>
            <person name="Sun E."/>
            <person name="Svirskas R."/>
            <person name="Tector C."/>
            <person name="Turner R."/>
            <person name="Venter E."/>
            <person name="Wang A.H."/>
            <person name="Wang X."/>
            <person name="Wang Z.-Y."/>
            <person name="Wassarman D.A."/>
            <person name="Weinstock G.M."/>
            <person name="Weissenbach J."/>
            <person name="Williams S.M."/>
            <person name="Woodage T."/>
            <person name="Worley K.C."/>
            <person name="Wu D."/>
            <person name="Yang S."/>
            <person name="Yao Q.A."/>
            <person name="Ye J."/>
            <person name="Yeh R.-F."/>
            <person name="Zaveri J.S."/>
            <person name="Zhan M."/>
            <person name="Zhang G."/>
            <person name="Zhao Q."/>
            <person name="Zheng L."/>
            <person name="Zheng X.H."/>
            <person name="Zhong F.N."/>
            <person name="Zhong W."/>
            <person name="Zhou X."/>
            <person name="Zhu S.C."/>
            <person name="Zhu X."/>
            <person name="Smith H.O."/>
            <person name="Gibbs R.A."/>
            <person name="Myers E.W."/>
            <person name="Rubin G.M."/>
            <person name="Venter J.C."/>
        </authorList>
    </citation>
    <scope>NUCLEOTIDE SEQUENCE [LARGE SCALE GENOMIC DNA]</scope>
    <source>
        <strain>Berkeley</strain>
    </source>
</reference>
<reference key="3">
    <citation type="journal article" date="2002" name="Genome Biol.">
        <title>Annotation of the Drosophila melanogaster euchromatic genome: a systematic review.</title>
        <authorList>
            <person name="Misra S."/>
            <person name="Crosby M.A."/>
            <person name="Mungall C.J."/>
            <person name="Matthews B.B."/>
            <person name="Campbell K.S."/>
            <person name="Hradecky P."/>
            <person name="Huang Y."/>
            <person name="Kaminker J.S."/>
            <person name="Millburn G.H."/>
            <person name="Prochnik S.E."/>
            <person name="Smith C.D."/>
            <person name="Tupy J.L."/>
            <person name="Whitfield E.J."/>
            <person name="Bayraktaroglu L."/>
            <person name="Berman B.P."/>
            <person name="Bettencourt B.R."/>
            <person name="Celniker S.E."/>
            <person name="de Grey A.D.N.J."/>
            <person name="Drysdale R.A."/>
            <person name="Harris N.L."/>
            <person name="Richter J."/>
            <person name="Russo S."/>
            <person name="Schroeder A.J."/>
            <person name="Shu S.Q."/>
            <person name="Stapleton M."/>
            <person name="Yamada C."/>
            <person name="Ashburner M."/>
            <person name="Gelbart W.M."/>
            <person name="Rubin G.M."/>
            <person name="Lewis S.E."/>
        </authorList>
    </citation>
    <scope>GENOME REANNOTATION</scope>
    <source>
        <strain>Berkeley</strain>
    </source>
</reference>
<reference key="4">
    <citation type="journal article" date="2002" name="Genome Biol.">
        <title>A Drosophila full-length cDNA resource.</title>
        <authorList>
            <person name="Stapleton M."/>
            <person name="Carlson J.W."/>
            <person name="Brokstein P."/>
            <person name="Yu C."/>
            <person name="Champe M."/>
            <person name="George R.A."/>
            <person name="Guarin H."/>
            <person name="Kronmiller B."/>
            <person name="Pacleb J.M."/>
            <person name="Park S."/>
            <person name="Wan K.H."/>
            <person name="Rubin G.M."/>
            <person name="Celniker S.E."/>
        </authorList>
    </citation>
    <scope>NUCLEOTIDE SEQUENCE [LARGE SCALE MRNA]</scope>
    <source>
        <strain>Berkeley</strain>
        <tissue>Embryo</tissue>
    </source>
</reference>
<accession>Q24562</accession>
<accession>Q9VXH2</accession>
<proteinExistence type="evidence at protein level"/>
<name>U2AF2_DROME</name>
<gene>
    <name type="primary">U2af50</name>
    <name type="ORF">CG9998</name>
</gene>
<protein>
    <recommendedName>
        <fullName>Splicing factor U2AF 50 kDa subunit</fullName>
    </recommendedName>
    <alternativeName>
        <fullName>U2 auxiliary factor 50 kDa subunit</fullName>
    </alternativeName>
    <alternativeName>
        <fullName>U2 snRNP auxiliary factor large subunit</fullName>
    </alternativeName>
</protein>
<sequence>MGYDDRERDRERRRHRSRSRDRHRERSRDRRHHRNSRRKPSLYWDVPPPGFEHITPMQYKAMQASGQIPASVVPDTPQTAVPVVGSTITRQARRLYVGNIPFGVTEEEMMEFFNQQMHLVGLAQAAGSPVLACQINLDKNFAFLEFRSIDETTQAMAFDGINLKGQSLKIRRPHDYQPMPGITDTPAIKPAVVSSGVISTVVPDSPHKIFIGGLPNYLNDDQVKELLLSFGKLRAFNLVKDAATGLSKGYAFCEYVDLSITDQSIAGLNGMQLGDKKLIVQRASVGAKNAQNAANTTQSVMLQVPGLSNVVTSGPPTEVLCLLNMVTPDELRDEEEYEDILEDIKEECTKYGVVRSVEIPRPIEGVEVPGCGKVFVEFNSVLDCQKAQQALTGRKFSDRVVVTSYFDPDKYHRREF</sequence>
<organism>
    <name type="scientific">Drosophila melanogaster</name>
    <name type="common">Fruit fly</name>
    <dbReference type="NCBI Taxonomy" id="7227"/>
    <lineage>
        <taxon>Eukaryota</taxon>
        <taxon>Metazoa</taxon>
        <taxon>Ecdysozoa</taxon>
        <taxon>Arthropoda</taxon>
        <taxon>Hexapoda</taxon>
        <taxon>Insecta</taxon>
        <taxon>Pterygota</taxon>
        <taxon>Neoptera</taxon>
        <taxon>Endopterygota</taxon>
        <taxon>Diptera</taxon>
        <taxon>Brachycera</taxon>
        <taxon>Muscomorpha</taxon>
        <taxon>Ephydroidea</taxon>
        <taxon>Drosophilidae</taxon>
        <taxon>Drosophila</taxon>
        <taxon>Sophophora</taxon>
    </lineage>
</organism>
<dbReference type="EMBL" id="L23404">
    <property type="protein sequence ID" value="AAA03548.1"/>
    <property type="molecule type" value="mRNA"/>
</dbReference>
<dbReference type="EMBL" id="AE014298">
    <property type="protein sequence ID" value="AAF48596.1"/>
    <property type="molecule type" value="Genomic_DNA"/>
</dbReference>
<dbReference type="EMBL" id="AY069320">
    <property type="protein sequence ID" value="AAL39465.1"/>
    <property type="molecule type" value="mRNA"/>
</dbReference>
<dbReference type="PIR" id="A48249">
    <property type="entry name" value="A48249"/>
</dbReference>
<dbReference type="RefSeq" id="NP_001245710.1">
    <property type="nucleotide sequence ID" value="NM_001258781.2"/>
</dbReference>
<dbReference type="RefSeq" id="NP_476891.1">
    <property type="nucleotide sequence ID" value="NM_057543.4"/>
</dbReference>
<dbReference type="SMR" id="Q24562"/>
<dbReference type="BioGRID" id="58942">
    <property type="interactions" value="13"/>
</dbReference>
<dbReference type="ComplexPortal" id="CPX-2302">
    <property type="entry name" value="U2 small nuclear ribonucleoprotein auxiliary factor complex"/>
</dbReference>
<dbReference type="DIP" id="DIP-23323N"/>
<dbReference type="FunCoup" id="Q24562">
    <property type="interactions" value="2520"/>
</dbReference>
<dbReference type="IntAct" id="Q24562">
    <property type="interactions" value="41"/>
</dbReference>
<dbReference type="STRING" id="7227.FBpp0298005"/>
<dbReference type="PaxDb" id="7227-FBpp0298005"/>
<dbReference type="EnsemblMetazoa" id="FBtr0074234">
    <property type="protein sequence ID" value="FBpp0074013"/>
    <property type="gene ID" value="FBgn0005411"/>
</dbReference>
<dbReference type="EnsemblMetazoa" id="FBtr0307178">
    <property type="protein sequence ID" value="FBpp0298007"/>
    <property type="gene ID" value="FBgn0005411"/>
</dbReference>
<dbReference type="GeneID" id="32602"/>
<dbReference type="KEGG" id="dme:Dmel_CG9998"/>
<dbReference type="AGR" id="FB:FBgn0005411"/>
<dbReference type="CTD" id="32602"/>
<dbReference type="FlyBase" id="FBgn0005411">
    <property type="gene designation" value="U2af50"/>
</dbReference>
<dbReference type="VEuPathDB" id="VectorBase:FBgn0005411"/>
<dbReference type="eggNOG" id="KOG0120">
    <property type="taxonomic scope" value="Eukaryota"/>
</dbReference>
<dbReference type="GeneTree" id="ENSGT00940000155556"/>
<dbReference type="InParanoid" id="Q24562"/>
<dbReference type="OrthoDB" id="10266058at2759"/>
<dbReference type="PhylomeDB" id="Q24562"/>
<dbReference type="Reactome" id="R-DME-159236">
    <property type="pathway name" value="Transport of Mature mRNA derived from an Intron-Containing Transcript"/>
</dbReference>
<dbReference type="Reactome" id="R-DME-72187">
    <property type="pathway name" value="mRNA 3'-end processing"/>
</dbReference>
<dbReference type="Reactome" id="R-DME-73856">
    <property type="pathway name" value="RNA Polymerase II Transcription Termination"/>
</dbReference>
<dbReference type="Reactome" id="R-DME-9629569">
    <property type="pathway name" value="Protein hydroxylation"/>
</dbReference>
<dbReference type="BioGRID-ORCS" id="32602">
    <property type="hits" value="1 hit in 1 CRISPR screen"/>
</dbReference>
<dbReference type="GenomeRNAi" id="32602"/>
<dbReference type="PRO" id="PR:Q24562"/>
<dbReference type="Proteomes" id="UP000000803">
    <property type="component" value="Chromosome X"/>
</dbReference>
<dbReference type="Bgee" id="FBgn0005411">
    <property type="expression patterns" value="Expressed in eye disc (Drosophila) and 166 other cell types or tissues"/>
</dbReference>
<dbReference type="ExpressionAtlas" id="Q24562">
    <property type="expression patterns" value="baseline and differential"/>
</dbReference>
<dbReference type="GO" id="GO:0000243">
    <property type="term" value="C:commitment complex"/>
    <property type="evidence" value="ECO:0000318"/>
    <property type="project" value="GO_Central"/>
</dbReference>
<dbReference type="GO" id="GO:0016607">
    <property type="term" value="C:nuclear speck"/>
    <property type="evidence" value="ECO:0000318"/>
    <property type="project" value="GO_Central"/>
</dbReference>
<dbReference type="GO" id="GO:0005654">
    <property type="term" value="C:nucleoplasm"/>
    <property type="evidence" value="ECO:0007005"/>
    <property type="project" value="FlyBase"/>
</dbReference>
<dbReference type="GO" id="GO:0005634">
    <property type="term" value="C:nucleus"/>
    <property type="evidence" value="ECO:0000305"/>
    <property type="project" value="FlyBase"/>
</dbReference>
<dbReference type="GO" id="GO:0071011">
    <property type="term" value="C:precatalytic spliceosome"/>
    <property type="evidence" value="ECO:0007005"/>
    <property type="project" value="FlyBase"/>
</dbReference>
<dbReference type="GO" id="GO:0005681">
    <property type="term" value="C:spliceosomal complex"/>
    <property type="evidence" value="ECO:0000250"/>
    <property type="project" value="FlyBase"/>
</dbReference>
<dbReference type="GO" id="GO:0071004">
    <property type="term" value="C:U2-type prespliceosome"/>
    <property type="evidence" value="ECO:0000318"/>
    <property type="project" value="GO_Central"/>
</dbReference>
<dbReference type="GO" id="GO:0089701">
    <property type="term" value="C:U2AF complex"/>
    <property type="evidence" value="ECO:0000314"/>
    <property type="project" value="FlyBase"/>
</dbReference>
<dbReference type="GO" id="GO:0003729">
    <property type="term" value="F:mRNA binding"/>
    <property type="evidence" value="ECO:0000250"/>
    <property type="project" value="FlyBase"/>
</dbReference>
<dbReference type="GO" id="GO:0008187">
    <property type="term" value="F:poly-pyrimidine tract binding"/>
    <property type="evidence" value="ECO:0000314"/>
    <property type="project" value="FlyBase"/>
</dbReference>
<dbReference type="GO" id="GO:0030628">
    <property type="term" value="F:pre-mRNA 3'-splice site binding"/>
    <property type="evidence" value="ECO:0000318"/>
    <property type="project" value="GO_Central"/>
</dbReference>
<dbReference type="GO" id="GO:0003723">
    <property type="term" value="F:RNA binding"/>
    <property type="evidence" value="ECO:0000315"/>
    <property type="project" value="FlyBase"/>
</dbReference>
<dbReference type="GO" id="GO:0000398">
    <property type="term" value="P:mRNA splicing, via spliceosome"/>
    <property type="evidence" value="ECO:0000315"/>
    <property type="project" value="FlyBase"/>
</dbReference>
<dbReference type="GO" id="GO:0051168">
    <property type="term" value="P:nuclear export"/>
    <property type="evidence" value="ECO:0000315"/>
    <property type="project" value="FlyBase"/>
</dbReference>
<dbReference type="GO" id="GO:0046833">
    <property type="term" value="P:positive regulation of RNA export from nucleus"/>
    <property type="evidence" value="ECO:0000315"/>
    <property type="project" value="FlyBase"/>
</dbReference>
<dbReference type="GO" id="GO:0000381">
    <property type="term" value="P:regulation of alternative mRNA splicing, via spliceosome"/>
    <property type="evidence" value="ECO:0007001"/>
    <property type="project" value="FlyBase"/>
</dbReference>
<dbReference type="GO" id="GO:0008380">
    <property type="term" value="P:RNA splicing"/>
    <property type="evidence" value="ECO:0000315"/>
    <property type="project" value="FlyBase"/>
</dbReference>
<dbReference type="GO" id="GO:0000245">
    <property type="term" value="P:spliceosomal complex assembly"/>
    <property type="evidence" value="ECO:0000318"/>
    <property type="project" value="GO_Central"/>
</dbReference>
<dbReference type="CDD" id="cd12230">
    <property type="entry name" value="RRM1_U2AF65"/>
    <property type="match status" value="1"/>
</dbReference>
<dbReference type="CDD" id="cd12231">
    <property type="entry name" value="RRM2_U2AF65"/>
    <property type="match status" value="1"/>
</dbReference>
<dbReference type="CDD" id="cd12232">
    <property type="entry name" value="RRM3_U2AF65"/>
    <property type="match status" value="1"/>
</dbReference>
<dbReference type="FunFam" id="3.30.70.330:FF:000074">
    <property type="entry name" value="U2 snRNP auxiliary factor large subunit"/>
    <property type="match status" value="1"/>
</dbReference>
<dbReference type="FunFam" id="3.30.70.330:FF:000097">
    <property type="entry name" value="U2 snRNP auxiliary factor large subunit"/>
    <property type="match status" value="1"/>
</dbReference>
<dbReference type="Gene3D" id="3.30.70.330">
    <property type="match status" value="3"/>
</dbReference>
<dbReference type="InterPro" id="IPR012677">
    <property type="entry name" value="Nucleotide-bd_a/b_plait_sf"/>
</dbReference>
<dbReference type="InterPro" id="IPR035979">
    <property type="entry name" value="RBD_domain_sf"/>
</dbReference>
<dbReference type="InterPro" id="IPR000504">
    <property type="entry name" value="RRM_dom"/>
</dbReference>
<dbReference type="InterPro" id="IPR006529">
    <property type="entry name" value="U2AF_lg"/>
</dbReference>
<dbReference type="NCBIfam" id="TIGR01642">
    <property type="entry name" value="U2AF_lg"/>
    <property type="match status" value="1"/>
</dbReference>
<dbReference type="PANTHER" id="PTHR23139">
    <property type="entry name" value="RNA-BINDING PROTEIN"/>
    <property type="match status" value="1"/>
</dbReference>
<dbReference type="Pfam" id="PF00076">
    <property type="entry name" value="RRM_1"/>
    <property type="match status" value="3"/>
</dbReference>
<dbReference type="SMART" id="SM00360">
    <property type="entry name" value="RRM"/>
    <property type="match status" value="3"/>
</dbReference>
<dbReference type="SUPFAM" id="SSF54928">
    <property type="entry name" value="RNA-binding domain, RBD"/>
    <property type="match status" value="2"/>
</dbReference>
<dbReference type="PROSITE" id="PS50102">
    <property type="entry name" value="RRM"/>
    <property type="match status" value="3"/>
</dbReference>
<feature type="chain" id="PRO_0000081992" description="Splicing factor U2AF 50 kDa subunit">
    <location>
        <begin position="1"/>
        <end position="416"/>
    </location>
</feature>
<feature type="domain" description="RRM 1" evidence="2">
    <location>
        <begin position="93"/>
        <end position="175"/>
    </location>
</feature>
<feature type="domain" description="RRM 2" evidence="2">
    <location>
        <begin position="207"/>
        <end position="285"/>
    </location>
</feature>
<feature type="domain" description="RRM 3" evidence="2">
    <location>
        <begin position="318"/>
        <end position="408"/>
    </location>
</feature>
<feature type="region of interest" description="Disordered" evidence="3">
    <location>
        <begin position="1"/>
        <end position="47"/>
    </location>
</feature>
<feature type="compositionally biased region" description="Basic and acidic residues" evidence="3">
    <location>
        <begin position="1"/>
        <end position="10"/>
    </location>
</feature>
<feature type="compositionally biased region" description="Basic residues" evidence="3">
    <location>
        <begin position="11"/>
        <end position="21"/>
    </location>
</feature>
<feature type="compositionally biased region" description="Basic residues" evidence="3">
    <location>
        <begin position="29"/>
        <end position="40"/>
    </location>
</feature>
<evidence type="ECO:0000250" key="1"/>
<evidence type="ECO:0000255" key="2">
    <source>
        <dbReference type="PROSITE-ProRule" id="PRU00176"/>
    </source>
</evidence>
<evidence type="ECO:0000256" key="3">
    <source>
        <dbReference type="SAM" id="MobiDB-lite"/>
    </source>
</evidence>
<evidence type="ECO:0000305" key="4"/>